<dbReference type="EC" id="1.1.1.86"/>
<dbReference type="EMBL" id="AC104284">
    <property type="protein sequence ID" value="AAU44107.1"/>
    <property type="molecule type" value="Genomic_DNA"/>
</dbReference>
<dbReference type="EMBL" id="AP008211">
    <property type="protein sequence ID" value="BAF18298.1"/>
    <property type="molecule type" value="Genomic_DNA"/>
</dbReference>
<dbReference type="EMBL" id="AP014961">
    <property type="protein sequence ID" value="BAS95451.1"/>
    <property type="molecule type" value="Genomic_DNA"/>
</dbReference>
<dbReference type="EMBL" id="AK065295">
    <property type="status" value="NOT_ANNOTATED_CDS"/>
    <property type="molecule type" value="mRNA"/>
</dbReference>
<dbReference type="RefSeq" id="XP_015640421.1">
    <property type="nucleotide sequence ID" value="XM_015784935.1"/>
</dbReference>
<dbReference type="PDB" id="3FR7">
    <property type="method" value="X-ray"/>
    <property type="resolution" value="1.55 A"/>
    <property type="chains" value="A/B=54-578"/>
</dbReference>
<dbReference type="PDB" id="3FR8">
    <property type="method" value="X-ray"/>
    <property type="resolution" value="2.80 A"/>
    <property type="chains" value="A/B=54-578"/>
</dbReference>
<dbReference type="PDBsum" id="3FR7"/>
<dbReference type="PDBsum" id="3FR8"/>
<dbReference type="SMR" id="Q65XK0"/>
<dbReference type="FunCoup" id="Q65XK0">
    <property type="interactions" value="1215"/>
</dbReference>
<dbReference type="STRING" id="39947.Q65XK0"/>
<dbReference type="ChEMBL" id="CHEMBL2366499"/>
<dbReference type="PaxDb" id="39947-Q65XK0"/>
<dbReference type="EnsemblPlants" id="Os05t0573700-01">
    <property type="protein sequence ID" value="Os05t0573700-01"/>
    <property type="gene ID" value="Os05g0573700"/>
</dbReference>
<dbReference type="Gramene" id="Os05t0573700-01">
    <property type="protein sequence ID" value="Os05t0573700-01"/>
    <property type="gene ID" value="Os05g0573700"/>
</dbReference>
<dbReference type="KEGG" id="dosa:Os05g0573700"/>
<dbReference type="eggNOG" id="ENOG502QQBF">
    <property type="taxonomic scope" value="Eukaryota"/>
</dbReference>
<dbReference type="InParanoid" id="Q65XK0"/>
<dbReference type="OMA" id="MVDNCSF"/>
<dbReference type="OrthoDB" id="10255643at2759"/>
<dbReference type="BRENDA" id="1.1.1.86">
    <property type="organism ID" value="4460"/>
</dbReference>
<dbReference type="PlantReactome" id="R-OSA-1119460">
    <property type="pathway name" value="Isoleucine biosynthesis from threonine"/>
</dbReference>
<dbReference type="PlantReactome" id="R-OSA-1119600">
    <property type="pathway name" value="Valine biosynthesis"/>
</dbReference>
<dbReference type="UniPathway" id="UPA00047">
    <property type="reaction ID" value="UER00056"/>
</dbReference>
<dbReference type="UniPathway" id="UPA00049">
    <property type="reaction ID" value="UER00060"/>
</dbReference>
<dbReference type="EvolutionaryTrace" id="Q65XK0"/>
<dbReference type="Proteomes" id="UP000000763">
    <property type="component" value="Chromosome 5"/>
</dbReference>
<dbReference type="Proteomes" id="UP000059680">
    <property type="component" value="Chromosome 5"/>
</dbReference>
<dbReference type="ExpressionAtlas" id="Q65XK0">
    <property type="expression patterns" value="baseline and differential"/>
</dbReference>
<dbReference type="GO" id="GO:0009507">
    <property type="term" value="C:chloroplast"/>
    <property type="evidence" value="ECO:0007669"/>
    <property type="project" value="UniProtKB-SubCell"/>
</dbReference>
<dbReference type="GO" id="GO:0004455">
    <property type="term" value="F:ketol-acid reductoisomerase activity"/>
    <property type="evidence" value="ECO:0000318"/>
    <property type="project" value="GO_Central"/>
</dbReference>
<dbReference type="GO" id="GO:0000287">
    <property type="term" value="F:magnesium ion binding"/>
    <property type="evidence" value="ECO:0000314"/>
    <property type="project" value="UniProtKB"/>
</dbReference>
<dbReference type="GO" id="GO:0070402">
    <property type="term" value="F:NADPH binding"/>
    <property type="evidence" value="ECO:0000314"/>
    <property type="project" value="UniProtKB"/>
</dbReference>
<dbReference type="GO" id="GO:0042803">
    <property type="term" value="F:protein homodimerization activity"/>
    <property type="evidence" value="ECO:0000353"/>
    <property type="project" value="UniProtKB"/>
</dbReference>
<dbReference type="GO" id="GO:0009097">
    <property type="term" value="P:isoleucine biosynthetic process"/>
    <property type="evidence" value="ECO:0000318"/>
    <property type="project" value="GO_Central"/>
</dbReference>
<dbReference type="GO" id="GO:0009099">
    <property type="term" value="P:L-valine biosynthetic process"/>
    <property type="evidence" value="ECO:0000318"/>
    <property type="project" value="GO_Central"/>
</dbReference>
<dbReference type="FunFam" id="1.10.1040.10:FF:000015">
    <property type="entry name" value="Ketol-acid reductoisomerase"/>
    <property type="match status" value="1"/>
</dbReference>
<dbReference type="FunFam" id="3.40.50.720:FF:000146">
    <property type="entry name" value="Ketol-acid reductoisomerase"/>
    <property type="match status" value="1"/>
</dbReference>
<dbReference type="Gene3D" id="1.10.1040.10">
    <property type="entry name" value="N-(1-d-carboxylethyl)-l-norvaline Dehydrogenase, domain 2"/>
    <property type="match status" value="1"/>
</dbReference>
<dbReference type="Gene3D" id="3.40.50.720">
    <property type="entry name" value="NAD(P)-binding Rossmann-like Domain"/>
    <property type="match status" value="1"/>
</dbReference>
<dbReference type="InterPro" id="IPR008927">
    <property type="entry name" value="6-PGluconate_DH-like_C_sf"/>
</dbReference>
<dbReference type="InterPro" id="IPR013328">
    <property type="entry name" value="6PGD_dom2"/>
</dbReference>
<dbReference type="InterPro" id="IPR013023">
    <property type="entry name" value="KARI"/>
</dbReference>
<dbReference type="InterPro" id="IPR000506">
    <property type="entry name" value="KARI_C"/>
</dbReference>
<dbReference type="InterPro" id="IPR013116">
    <property type="entry name" value="KARI_N"/>
</dbReference>
<dbReference type="InterPro" id="IPR016206">
    <property type="entry name" value="KetolA_reductoisomerase_plant"/>
</dbReference>
<dbReference type="InterPro" id="IPR036291">
    <property type="entry name" value="NAD(P)-bd_dom_sf"/>
</dbReference>
<dbReference type="PANTHER" id="PTHR21371">
    <property type="entry name" value="KETOL-ACID REDUCTOISOMERASE, MITOCHONDRIAL"/>
    <property type="match status" value="1"/>
</dbReference>
<dbReference type="PANTHER" id="PTHR21371:SF1">
    <property type="entry name" value="KETOL-ACID REDUCTOISOMERASE, MITOCHONDRIAL"/>
    <property type="match status" value="1"/>
</dbReference>
<dbReference type="Pfam" id="PF01450">
    <property type="entry name" value="KARI_C"/>
    <property type="match status" value="2"/>
</dbReference>
<dbReference type="Pfam" id="PF07991">
    <property type="entry name" value="KARI_N"/>
    <property type="match status" value="1"/>
</dbReference>
<dbReference type="PIRSF" id="PIRSF000118">
    <property type="entry name" value="Ilv5_plant"/>
    <property type="match status" value="1"/>
</dbReference>
<dbReference type="SUPFAM" id="SSF48179">
    <property type="entry name" value="6-phosphogluconate dehydrogenase C-terminal domain-like"/>
    <property type="match status" value="1"/>
</dbReference>
<dbReference type="SUPFAM" id="SSF51735">
    <property type="entry name" value="NAD(P)-binding Rossmann-fold domains"/>
    <property type="match status" value="1"/>
</dbReference>
<dbReference type="PROSITE" id="PS51851">
    <property type="entry name" value="KARI_C"/>
    <property type="match status" value="2"/>
</dbReference>
<dbReference type="PROSITE" id="PS51850">
    <property type="entry name" value="KARI_N"/>
    <property type="match status" value="1"/>
</dbReference>
<evidence type="ECO:0000255" key="1"/>
<evidence type="ECO:0000255" key="2">
    <source>
        <dbReference type="PROSITE-ProRule" id="PRU01197"/>
    </source>
</evidence>
<evidence type="ECO:0000255" key="3">
    <source>
        <dbReference type="PROSITE-ProRule" id="PRU01198"/>
    </source>
</evidence>
<evidence type="ECO:0000269" key="4">
    <source>
    </source>
</evidence>
<evidence type="ECO:0000305" key="5"/>
<evidence type="ECO:0007829" key="6">
    <source>
        <dbReference type="PDB" id="3FR7"/>
    </source>
</evidence>
<evidence type="ECO:0007829" key="7">
    <source>
        <dbReference type="PDB" id="3FR8"/>
    </source>
</evidence>
<proteinExistence type="evidence at protein level"/>
<gene>
    <name type="ordered locus">Os05g0573700</name>
    <name type="ordered locus">LOC_Os05g49800</name>
    <name type="ORF">OJ1735_C10.18</name>
</gene>
<comment type="catalytic activity">
    <reaction>
        <text>(2R)-2,3-dihydroxy-3-methylbutanoate + NADP(+) = (2S)-2-acetolactate + NADPH + H(+)</text>
        <dbReference type="Rhea" id="RHEA:22068"/>
        <dbReference type="ChEBI" id="CHEBI:15378"/>
        <dbReference type="ChEBI" id="CHEBI:49072"/>
        <dbReference type="ChEBI" id="CHEBI:57783"/>
        <dbReference type="ChEBI" id="CHEBI:58349"/>
        <dbReference type="ChEBI" id="CHEBI:58476"/>
        <dbReference type="EC" id="1.1.1.86"/>
    </reaction>
</comment>
<comment type="catalytic activity">
    <reaction>
        <text>(2R,3R)-2,3-dihydroxy-3-methylpentanoate + NADP(+) = (S)-2-ethyl-2-hydroxy-3-oxobutanoate + NADPH + H(+)</text>
        <dbReference type="Rhea" id="RHEA:13493"/>
        <dbReference type="ChEBI" id="CHEBI:15378"/>
        <dbReference type="ChEBI" id="CHEBI:49256"/>
        <dbReference type="ChEBI" id="CHEBI:49258"/>
        <dbReference type="ChEBI" id="CHEBI:57783"/>
        <dbReference type="ChEBI" id="CHEBI:58349"/>
        <dbReference type="EC" id="1.1.1.86"/>
    </reaction>
</comment>
<comment type="cofactor">
    <cofactor>
        <name>Mg(2+)</name>
        <dbReference type="ChEBI" id="CHEBI:18420"/>
    </cofactor>
    <text>Binds 2 magnesium ions per subunit.</text>
</comment>
<comment type="pathway">
    <text>Amino-acid biosynthesis; L-isoleucine biosynthesis; L-isoleucine from 2-oxobutanoate: step 2/4.</text>
</comment>
<comment type="pathway">
    <text>Amino-acid biosynthesis; L-valine biosynthesis; L-valine from pyruvate: step 2/4.</text>
</comment>
<comment type="subunit">
    <text evidence="4">Homodimer.</text>
</comment>
<comment type="subcellular location">
    <subcellularLocation>
        <location evidence="5">Plastid</location>
        <location evidence="5">Chloroplast</location>
    </subcellularLocation>
</comment>
<comment type="similarity">
    <text evidence="5">Belongs to the ketol-acid reductoisomerase family.</text>
</comment>
<name>ILV5_ORYSJ</name>
<feature type="transit peptide" description="Chloroplast" evidence="1">
    <location>
        <begin position="1"/>
        <end position="52"/>
    </location>
</feature>
<feature type="chain" id="PRO_0000383458" description="Ketol-acid reductoisomerase, chloroplastic">
    <location>
        <begin position="53"/>
        <end position="578"/>
    </location>
</feature>
<feature type="domain" description="KARI N-terminal Rossmann" evidence="2">
    <location>
        <begin position="90"/>
        <end position="288"/>
    </location>
</feature>
<feature type="domain" description="KARI C-terminal knotted 1" evidence="3">
    <location>
        <begin position="289"/>
        <end position="437"/>
    </location>
</feature>
<feature type="domain" description="KARI C-terminal knotted 2" evidence="3">
    <location>
        <begin position="438"/>
        <end position="574"/>
    </location>
</feature>
<feature type="active site" evidence="1">
    <location>
        <position position="208"/>
    </location>
</feature>
<feature type="binding site" evidence="4">
    <location>
        <begin position="111"/>
        <end position="118"/>
    </location>
    <ligand>
        <name>NADP(+)</name>
        <dbReference type="ChEBI" id="CHEBI:58349"/>
    </ligand>
</feature>
<feature type="binding site" evidence="4">
    <location>
        <begin position="144"/>
        <end position="149"/>
    </location>
    <ligand>
        <name>NADP(+)</name>
        <dbReference type="ChEBI" id="CHEBI:58349"/>
    </ligand>
</feature>
<feature type="binding site" evidence="4">
    <location>
        <begin position="183"/>
        <end position="187"/>
    </location>
    <ligand>
        <name>NADP(+)</name>
        <dbReference type="ChEBI" id="CHEBI:58349"/>
    </ligand>
</feature>
<feature type="binding site" evidence="3">
    <location>
        <position position="297"/>
    </location>
    <ligand>
        <name>Mg(2+)</name>
        <dbReference type="ChEBI" id="CHEBI:18420"/>
        <label>1</label>
    </ligand>
</feature>
<feature type="binding site" evidence="3">
    <location>
        <position position="297"/>
    </location>
    <ligand>
        <name>Mg(2+)</name>
        <dbReference type="ChEBI" id="CHEBI:18420"/>
        <label>2</label>
    </ligand>
</feature>
<feature type="binding site" evidence="3">
    <location>
        <position position="301"/>
    </location>
    <ligand>
        <name>Mg(2+)</name>
        <dbReference type="ChEBI" id="CHEBI:18420"/>
        <label>1</label>
    </ligand>
</feature>
<feature type="binding site" evidence="3">
    <location>
        <position position="474"/>
    </location>
    <ligand>
        <name>Mg(2+)</name>
        <dbReference type="ChEBI" id="CHEBI:18420"/>
        <label>2</label>
    </ligand>
</feature>
<feature type="binding site" evidence="3">
    <location>
        <position position="478"/>
    </location>
    <ligand>
        <name>Mg(2+)</name>
        <dbReference type="ChEBI" id="CHEBI:18420"/>
        <label>2</label>
    </ligand>
</feature>
<feature type="binding site" evidence="3">
    <location>
        <position position="500"/>
    </location>
    <ligand>
        <name>substrate</name>
    </ligand>
</feature>
<feature type="sequence conflict" description="In Ref. 5; AK065295." evidence="5" ref="5">
    <original>S</original>
    <variation>F</variation>
    <location>
        <position position="173"/>
    </location>
</feature>
<feature type="sequence conflict" description="In Ref. 5; AK065295." evidence="5" ref="5">
    <original>S</original>
    <variation>L</variation>
    <location>
        <position position="183"/>
    </location>
</feature>
<feature type="strand" evidence="6">
    <location>
        <begin position="73"/>
        <end position="75"/>
    </location>
</feature>
<feature type="strand" evidence="6">
    <location>
        <begin position="77"/>
        <end position="82"/>
    </location>
</feature>
<feature type="strand" evidence="6">
    <location>
        <begin position="85"/>
        <end position="91"/>
    </location>
</feature>
<feature type="helix" evidence="6">
    <location>
        <begin position="94"/>
        <end position="99"/>
    </location>
</feature>
<feature type="helix" evidence="6">
    <location>
        <begin position="100"/>
        <end position="103"/>
    </location>
</feature>
<feature type="turn" evidence="6">
    <location>
        <begin position="104"/>
        <end position="106"/>
    </location>
</feature>
<feature type="strand" evidence="6">
    <location>
        <begin position="108"/>
        <end position="113"/>
    </location>
</feature>
<feature type="helix" evidence="6">
    <location>
        <begin position="118"/>
        <end position="132"/>
    </location>
</feature>
<feature type="strand" evidence="6">
    <location>
        <begin position="138"/>
        <end position="143"/>
    </location>
</feature>
<feature type="helix" evidence="6">
    <location>
        <begin position="150"/>
        <end position="155"/>
    </location>
</feature>
<feature type="turn" evidence="6">
    <location>
        <begin position="160"/>
        <end position="163"/>
    </location>
</feature>
<feature type="strand" evidence="6">
    <location>
        <begin position="165"/>
        <end position="167"/>
    </location>
</feature>
<feature type="helix" evidence="6">
    <location>
        <begin position="168"/>
        <end position="174"/>
    </location>
</feature>
<feature type="strand" evidence="6">
    <location>
        <begin position="176"/>
        <end position="180"/>
    </location>
</feature>
<feature type="helix" evidence="6">
    <location>
        <begin position="184"/>
        <end position="197"/>
    </location>
</feature>
<feature type="strand" evidence="6">
    <location>
        <begin position="203"/>
        <end position="209"/>
    </location>
</feature>
<feature type="helix" evidence="6">
    <location>
        <begin position="210"/>
        <end position="217"/>
    </location>
</feature>
<feature type="strand" evidence="6">
    <location>
        <begin position="226"/>
        <end position="235"/>
    </location>
</feature>
<feature type="helix" evidence="6">
    <location>
        <begin position="237"/>
        <end position="247"/>
    </location>
</feature>
<feature type="strand" evidence="6">
    <location>
        <begin position="257"/>
        <end position="263"/>
    </location>
</feature>
<feature type="strand" evidence="6">
    <location>
        <begin position="265"/>
        <end position="267"/>
    </location>
</feature>
<feature type="helix" evidence="6">
    <location>
        <begin position="269"/>
        <end position="279"/>
    </location>
</feature>
<feature type="strand" evidence="6">
    <location>
        <begin position="283"/>
        <end position="287"/>
    </location>
</feature>
<feature type="helix" evidence="6">
    <location>
        <begin position="290"/>
        <end position="302"/>
    </location>
</feature>
<feature type="turn" evidence="6">
    <location>
        <begin position="303"/>
        <end position="306"/>
    </location>
</feature>
<feature type="helix" evidence="6">
    <location>
        <begin position="307"/>
        <end position="322"/>
    </location>
</feature>
<feature type="helix" evidence="6">
    <location>
        <begin position="327"/>
        <end position="333"/>
    </location>
</feature>
<feature type="helix" evidence="6">
    <location>
        <begin position="335"/>
        <end position="339"/>
    </location>
</feature>
<feature type="helix" evidence="6">
    <location>
        <begin position="341"/>
        <end position="349"/>
    </location>
</feature>
<feature type="helix" evidence="6">
    <location>
        <begin position="351"/>
        <end position="356"/>
    </location>
</feature>
<feature type="helix" evidence="6">
    <location>
        <begin position="360"/>
        <end position="390"/>
    </location>
</feature>
<feature type="helix" evidence="6">
    <location>
        <begin position="392"/>
        <end position="402"/>
    </location>
</feature>
<feature type="helix" evidence="6">
    <location>
        <begin position="422"/>
        <end position="433"/>
    </location>
</feature>
<feature type="helix" evidence="6">
    <location>
        <begin position="444"/>
        <end position="463"/>
    </location>
</feature>
<feature type="helix" evidence="6">
    <location>
        <begin position="468"/>
        <end position="475"/>
    </location>
</feature>
<feature type="helix" evidence="6">
    <location>
        <begin position="477"/>
        <end position="481"/>
    </location>
</feature>
<feature type="helix" evidence="6">
    <location>
        <begin position="483"/>
        <end position="490"/>
    </location>
</feature>
<feature type="helix" evidence="6">
    <location>
        <begin position="492"/>
        <end position="498"/>
    </location>
</feature>
<feature type="helix" evidence="6">
    <location>
        <begin position="501"/>
        <end position="520"/>
    </location>
</feature>
<feature type="helix" evidence="6">
    <location>
        <begin position="522"/>
        <end position="527"/>
    </location>
</feature>
<feature type="helix" evidence="6">
    <location>
        <begin position="534"/>
        <end position="542"/>
    </location>
</feature>
<feature type="helix" evidence="6">
    <location>
        <begin position="545"/>
        <end position="553"/>
    </location>
</feature>
<feature type="strand" evidence="7">
    <location>
        <begin position="568"/>
        <end position="570"/>
    </location>
</feature>
<accession>Q65XK0</accession>
<accession>A0A0P0WRB0</accession>
<organism>
    <name type="scientific">Oryza sativa subsp. japonica</name>
    <name type="common">Rice</name>
    <dbReference type="NCBI Taxonomy" id="39947"/>
    <lineage>
        <taxon>Eukaryota</taxon>
        <taxon>Viridiplantae</taxon>
        <taxon>Streptophyta</taxon>
        <taxon>Embryophyta</taxon>
        <taxon>Tracheophyta</taxon>
        <taxon>Spermatophyta</taxon>
        <taxon>Magnoliopsida</taxon>
        <taxon>Liliopsida</taxon>
        <taxon>Poales</taxon>
        <taxon>Poaceae</taxon>
        <taxon>BOP clade</taxon>
        <taxon>Oryzoideae</taxon>
        <taxon>Oryzeae</taxon>
        <taxon>Oryzinae</taxon>
        <taxon>Oryza</taxon>
        <taxon>Oryza sativa</taxon>
    </lineage>
</organism>
<sequence length="578" mass="62377">MAASTTLALSHPKTLAAAAAAAPKAPTAPAAVSFPVSHAACAPLAARRRAVTAMVAAPPAVGAAMPSLDFDTSVFNKEKVSLAGHEEYIVRGGRNLFPLLPEAFKGIKQIGVIGWGSQGPAQAQNLRDSLAEAKSDIVVKIGLRKGSKSFDEARAAGFTEESGTLGDIWETVSGSDLVLLLISDAAQADNYEKIFSHMKPNSILGLSHGFLLGHLQSAGLDFPKNISVIAVCPKGMGPSVRRLYVQGKEINGAGINSSFAVHQDVDGRATDVALGWSVALGSPFTFATTLEQEYKSDIFGERGILLGAVHGIVEALFRRYTEQGMDEEMAYKNTVEGITGIISKTISKKGMLEVYNSLTEEGKKEFNKAYSASFYPCMDILYECYEDVASGSEIRSVVLAGRRFYEKEGLPAFPMGNIDQTRMWKVGEKVRSTRPENDLGPLHPFTAGVYVALMMAQIEVLRKKGHSYSEIINESVIESVDSLNPFMHARGVAFMVDNCSTTARLGSRKWAPRFDYILTQQAFVTVDKDAPINQDLISNFMSDPVHGAIEVCAELRPTVDISVPANADFVRPELRQSS</sequence>
<protein>
    <recommendedName>
        <fullName>Ketol-acid reductoisomerase, chloroplastic</fullName>
        <ecNumber>1.1.1.86</ecNumber>
    </recommendedName>
    <alternativeName>
        <fullName>Acetohydroxy-acid reductoisomerase</fullName>
    </alternativeName>
    <alternativeName>
        <fullName>Alpha-keto-beta-hydroxylacyl reductoisomerase</fullName>
    </alternativeName>
    <alternativeName>
        <fullName>Protein KARI</fullName>
    </alternativeName>
</protein>
<keyword id="KW-0002">3D-structure</keyword>
<keyword id="KW-0028">Amino-acid biosynthesis</keyword>
<keyword id="KW-0100">Branched-chain amino acid biosynthesis</keyword>
<keyword id="KW-0150">Chloroplast</keyword>
<keyword id="KW-0460">Magnesium</keyword>
<keyword id="KW-0479">Metal-binding</keyword>
<keyword id="KW-0521">NADP</keyword>
<keyword id="KW-0560">Oxidoreductase</keyword>
<keyword id="KW-0934">Plastid</keyword>
<keyword id="KW-1185">Reference proteome</keyword>
<keyword id="KW-0809">Transit peptide</keyword>
<reference key="1">
    <citation type="journal article" date="2005" name="Mol. Genet. Genomics">
        <title>A fine physical map of the rice chromosome 5.</title>
        <authorList>
            <person name="Cheng C.-H."/>
            <person name="Chung M.C."/>
            <person name="Liu S.-M."/>
            <person name="Chen S.-K."/>
            <person name="Kao F.Y."/>
            <person name="Lin S.-J."/>
            <person name="Hsiao S.-H."/>
            <person name="Tseng I.C."/>
            <person name="Hsing Y.-I.C."/>
            <person name="Wu H.-P."/>
            <person name="Chen C.-S."/>
            <person name="Shaw J.-F."/>
            <person name="Wu J."/>
            <person name="Matsumoto T."/>
            <person name="Sasaki T."/>
            <person name="Chen H.-C."/>
            <person name="Chow T.-Y."/>
        </authorList>
    </citation>
    <scope>NUCLEOTIDE SEQUENCE [LARGE SCALE GENOMIC DNA]</scope>
    <source>
        <strain>cv. Nipponbare</strain>
    </source>
</reference>
<reference key="2">
    <citation type="journal article" date="2005" name="Nature">
        <title>The map-based sequence of the rice genome.</title>
        <authorList>
            <consortium name="International rice genome sequencing project (IRGSP)"/>
        </authorList>
    </citation>
    <scope>NUCLEOTIDE SEQUENCE [LARGE SCALE GENOMIC DNA]</scope>
    <source>
        <strain>cv. Nipponbare</strain>
    </source>
</reference>
<reference key="3">
    <citation type="journal article" date="2008" name="Nucleic Acids Res.">
        <title>The rice annotation project database (RAP-DB): 2008 update.</title>
        <authorList>
            <consortium name="The rice annotation project (RAP)"/>
        </authorList>
    </citation>
    <scope>GENOME REANNOTATION</scope>
    <source>
        <strain>cv. Nipponbare</strain>
    </source>
</reference>
<reference key="4">
    <citation type="journal article" date="2013" name="Rice">
        <title>Improvement of the Oryza sativa Nipponbare reference genome using next generation sequence and optical map data.</title>
        <authorList>
            <person name="Kawahara Y."/>
            <person name="de la Bastide M."/>
            <person name="Hamilton J.P."/>
            <person name="Kanamori H."/>
            <person name="McCombie W.R."/>
            <person name="Ouyang S."/>
            <person name="Schwartz D.C."/>
            <person name="Tanaka T."/>
            <person name="Wu J."/>
            <person name="Zhou S."/>
            <person name="Childs K.L."/>
            <person name="Davidson R.M."/>
            <person name="Lin H."/>
            <person name="Quesada-Ocampo L."/>
            <person name="Vaillancourt B."/>
            <person name="Sakai H."/>
            <person name="Lee S.S."/>
            <person name="Kim J."/>
            <person name="Numa H."/>
            <person name="Itoh T."/>
            <person name="Buell C.R."/>
            <person name="Matsumoto T."/>
        </authorList>
    </citation>
    <scope>GENOME REANNOTATION</scope>
    <source>
        <strain>cv. Nipponbare</strain>
    </source>
</reference>
<reference key="5">
    <citation type="journal article" date="2003" name="Science">
        <title>Collection, mapping, and annotation of over 28,000 cDNA clones from japonica rice.</title>
        <authorList>
            <consortium name="The rice full-length cDNA consortium"/>
        </authorList>
    </citation>
    <scope>NUCLEOTIDE SEQUENCE [LARGE SCALE MRNA]</scope>
    <source>
        <strain>cv. Nipponbare</strain>
    </source>
</reference>
<reference key="6">
    <citation type="journal article" date="2009" name="J. Mol. Biol.">
        <title>Conformational changes in a plant ketol-acid reductoisomerase upon Mg(2+) and NADPH binding as revealed by two crystal structures.</title>
        <authorList>
            <person name="Leung E.W.W."/>
            <person name="Guddat L.W."/>
        </authorList>
    </citation>
    <scope>X-RAY CRYSTALLOGRAPHY (1.55 ANGSTROMS) OF 54-578 IN COMPLEX WITH MAGNESIUM IONS AND NADPH</scope>
    <scope>SUBUNIT</scope>
</reference>